<reference key="1">
    <citation type="journal article" date="2002" name="Nature">
        <title>Genome sequence of the plant pathogen Ralstonia solanacearum.</title>
        <authorList>
            <person name="Salanoubat M."/>
            <person name="Genin S."/>
            <person name="Artiguenave F."/>
            <person name="Gouzy J."/>
            <person name="Mangenot S."/>
            <person name="Arlat M."/>
            <person name="Billault A."/>
            <person name="Brottier P."/>
            <person name="Camus J.-C."/>
            <person name="Cattolico L."/>
            <person name="Chandler M."/>
            <person name="Choisne N."/>
            <person name="Claudel-Renard C."/>
            <person name="Cunnac S."/>
            <person name="Demange N."/>
            <person name="Gaspin C."/>
            <person name="Lavie M."/>
            <person name="Moisan A."/>
            <person name="Robert C."/>
            <person name="Saurin W."/>
            <person name="Schiex T."/>
            <person name="Siguier P."/>
            <person name="Thebault P."/>
            <person name="Whalen M."/>
            <person name="Wincker P."/>
            <person name="Levy M."/>
            <person name="Weissenbach J."/>
            <person name="Boucher C.A."/>
        </authorList>
    </citation>
    <scope>NUCLEOTIDE SEQUENCE [LARGE SCALE GENOMIC DNA]</scope>
    <source>
        <strain>ATCC BAA-1114 / GMI1000</strain>
    </source>
</reference>
<name>HFQ_RALN1</name>
<organism>
    <name type="scientific">Ralstonia nicotianae (strain ATCC BAA-1114 / GMI1000)</name>
    <name type="common">Ralstonia solanacearum</name>
    <dbReference type="NCBI Taxonomy" id="267608"/>
    <lineage>
        <taxon>Bacteria</taxon>
        <taxon>Pseudomonadati</taxon>
        <taxon>Pseudomonadota</taxon>
        <taxon>Betaproteobacteria</taxon>
        <taxon>Burkholderiales</taxon>
        <taxon>Burkholderiaceae</taxon>
        <taxon>Ralstonia</taxon>
        <taxon>Ralstonia solanacearum species complex</taxon>
    </lineage>
</organism>
<accession>Q8Y025</accession>
<gene>
    <name evidence="1" type="primary">hfq</name>
    <name type="ordered locus">RSc1220</name>
    <name type="ORF">RS02722</name>
</gene>
<evidence type="ECO:0000255" key="1">
    <source>
        <dbReference type="HAMAP-Rule" id="MF_00436"/>
    </source>
</evidence>
<evidence type="ECO:0000255" key="2">
    <source>
        <dbReference type="PROSITE-ProRule" id="PRU01346"/>
    </source>
</evidence>
<sequence length="79" mass="8872">MSNKGQLLQDPFLNALRKEHVPVSIYLVNGIKLQGNIESFDQYVVLLRNTVTQMVYKHAISTVVPARAVNFRVDEASDA</sequence>
<dbReference type="EMBL" id="AL646052">
    <property type="protein sequence ID" value="CAD14922.1"/>
    <property type="molecule type" value="Genomic_DNA"/>
</dbReference>
<dbReference type="RefSeq" id="WP_003263868.1">
    <property type="nucleotide sequence ID" value="NC_003295.1"/>
</dbReference>
<dbReference type="SMR" id="Q8Y025"/>
<dbReference type="STRING" id="267608.RSc1220"/>
<dbReference type="EnsemblBacteria" id="CAD14922">
    <property type="protein sequence ID" value="CAD14922"/>
    <property type="gene ID" value="RSc1220"/>
</dbReference>
<dbReference type="GeneID" id="93852340"/>
<dbReference type="KEGG" id="rso:RSc1220"/>
<dbReference type="eggNOG" id="COG1923">
    <property type="taxonomic scope" value="Bacteria"/>
</dbReference>
<dbReference type="HOGENOM" id="CLU_113688_2_2_4"/>
<dbReference type="Proteomes" id="UP000001436">
    <property type="component" value="Chromosome"/>
</dbReference>
<dbReference type="GO" id="GO:0005829">
    <property type="term" value="C:cytosol"/>
    <property type="evidence" value="ECO:0007669"/>
    <property type="project" value="TreeGrafter"/>
</dbReference>
<dbReference type="GO" id="GO:0003723">
    <property type="term" value="F:RNA binding"/>
    <property type="evidence" value="ECO:0007669"/>
    <property type="project" value="UniProtKB-UniRule"/>
</dbReference>
<dbReference type="GO" id="GO:0006355">
    <property type="term" value="P:regulation of DNA-templated transcription"/>
    <property type="evidence" value="ECO:0007669"/>
    <property type="project" value="InterPro"/>
</dbReference>
<dbReference type="GO" id="GO:0043487">
    <property type="term" value="P:regulation of RNA stability"/>
    <property type="evidence" value="ECO:0007669"/>
    <property type="project" value="TreeGrafter"/>
</dbReference>
<dbReference type="GO" id="GO:0045974">
    <property type="term" value="P:regulation of translation, ncRNA-mediated"/>
    <property type="evidence" value="ECO:0007669"/>
    <property type="project" value="TreeGrafter"/>
</dbReference>
<dbReference type="CDD" id="cd01716">
    <property type="entry name" value="Hfq"/>
    <property type="match status" value="1"/>
</dbReference>
<dbReference type="FunFam" id="2.30.30.100:FF:000001">
    <property type="entry name" value="RNA-binding protein Hfq"/>
    <property type="match status" value="1"/>
</dbReference>
<dbReference type="Gene3D" id="2.30.30.100">
    <property type="match status" value="1"/>
</dbReference>
<dbReference type="HAMAP" id="MF_00436">
    <property type="entry name" value="Hfq"/>
    <property type="match status" value="1"/>
</dbReference>
<dbReference type="InterPro" id="IPR005001">
    <property type="entry name" value="Hfq"/>
</dbReference>
<dbReference type="InterPro" id="IPR010920">
    <property type="entry name" value="LSM_dom_sf"/>
</dbReference>
<dbReference type="InterPro" id="IPR047575">
    <property type="entry name" value="Sm"/>
</dbReference>
<dbReference type="NCBIfam" id="TIGR02383">
    <property type="entry name" value="Hfq"/>
    <property type="match status" value="1"/>
</dbReference>
<dbReference type="NCBIfam" id="NF001602">
    <property type="entry name" value="PRK00395.1"/>
    <property type="match status" value="1"/>
</dbReference>
<dbReference type="PANTHER" id="PTHR34772">
    <property type="entry name" value="RNA-BINDING PROTEIN HFQ"/>
    <property type="match status" value="1"/>
</dbReference>
<dbReference type="PANTHER" id="PTHR34772:SF1">
    <property type="entry name" value="RNA-BINDING PROTEIN HFQ"/>
    <property type="match status" value="1"/>
</dbReference>
<dbReference type="Pfam" id="PF17209">
    <property type="entry name" value="Hfq"/>
    <property type="match status" value="1"/>
</dbReference>
<dbReference type="SUPFAM" id="SSF50182">
    <property type="entry name" value="Sm-like ribonucleoproteins"/>
    <property type="match status" value="1"/>
</dbReference>
<dbReference type="PROSITE" id="PS52002">
    <property type="entry name" value="SM"/>
    <property type="match status" value="1"/>
</dbReference>
<feature type="chain" id="PRO_0000095660" description="RNA-binding protein Hfq">
    <location>
        <begin position="1"/>
        <end position="79"/>
    </location>
</feature>
<feature type="domain" description="Sm" evidence="2">
    <location>
        <begin position="10"/>
        <end position="69"/>
    </location>
</feature>
<protein>
    <recommendedName>
        <fullName evidence="1">RNA-binding protein Hfq</fullName>
    </recommendedName>
</protein>
<proteinExistence type="inferred from homology"/>
<comment type="function">
    <text evidence="1">RNA chaperone that binds small regulatory RNA (sRNAs) and mRNAs to facilitate mRNA translational regulation in response to envelope stress, environmental stress and changes in metabolite concentrations. Also binds with high specificity to tRNAs.</text>
</comment>
<comment type="subunit">
    <text evidence="1">Homohexamer.</text>
</comment>
<comment type="similarity">
    <text evidence="1">Belongs to the Hfq family.</text>
</comment>
<keyword id="KW-1185">Reference proteome</keyword>
<keyword id="KW-0694">RNA-binding</keyword>
<keyword id="KW-0346">Stress response</keyword>